<proteinExistence type="inferred from homology"/>
<name>PSF1_NEUCR</name>
<feature type="chain" id="PRO_0000278404" description="DNA replication complex GINS protein psf1">
    <location>
        <begin position="1"/>
        <end position="216"/>
    </location>
</feature>
<feature type="region of interest" description="Disordered" evidence="2">
    <location>
        <begin position="110"/>
        <end position="133"/>
    </location>
</feature>
<feature type="compositionally biased region" description="Gly residues" evidence="2">
    <location>
        <begin position="111"/>
        <end position="127"/>
    </location>
</feature>
<gene>
    <name type="primary">drc-1</name>
    <name type="synonym">psf1</name>
    <name type="ORF">NCU02631</name>
</gene>
<organism>
    <name type="scientific">Neurospora crassa (strain ATCC 24698 / 74-OR23-1A / CBS 708.71 / DSM 1257 / FGSC 987)</name>
    <dbReference type="NCBI Taxonomy" id="367110"/>
    <lineage>
        <taxon>Eukaryota</taxon>
        <taxon>Fungi</taxon>
        <taxon>Dikarya</taxon>
        <taxon>Ascomycota</taxon>
        <taxon>Pezizomycotina</taxon>
        <taxon>Sordariomycetes</taxon>
        <taxon>Sordariomycetidae</taxon>
        <taxon>Sordariales</taxon>
        <taxon>Sordariaceae</taxon>
        <taxon>Neurospora</taxon>
    </lineage>
</organism>
<keyword id="KW-0235">DNA replication</keyword>
<keyword id="KW-0539">Nucleus</keyword>
<keyword id="KW-1185">Reference proteome</keyword>
<dbReference type="EMBL" id="CM002236">
    <property type="protein sequence ID" value="EAA34820.1"/>
    <property type="molecule type" value="Genomic_DNA"/>
</dbReference>
<dbReference type="RefSeq" id="XP_964056.1">
    <property type="nucleotide sequence ID" value="XM_958963.2"/>
</dbReference>
<dbReference type="SMR" id="Q7SDH9"/>
<dbReference type="FunCoup" id="Q7SDH9">
    <property type="interactions" value="418"/>
</dbReference>
<dbReference type="STRING" id="367110.Q7SDH9"/>
<dbReference type="PaxDb" id="5141-EFNCRP00000002169"/>
<dbReference type="EnsemblFungi" id="EAA34820">
    <property type="protein sequence ID" value="EAA34820"/>
    <property type="gene ID" value="NCU02631"/>
</dbReference>
<dbReference type="GeneID" id="3880205"/>
<dbReference type="KEGG" id="ncr:NCU02631"/>
<dbReference type="VEuPathDB" id="FungiDB:NCU02631"/>
<dbReference type="HOGENOM" id="CLU_079191_0_0_1"/>
<dbReference type="InParanoid" id="Q7SDH9"/>
<dbReference type="OrthoDB" id="10252587at2759"/>
<dbReference type="Proteomes" id="UP000001805">
    <property type="component" value="Chromosome 1, Linkage Group I"/>
</dbReference>
<dbReference type="GO" id="GO:0071162">
    <property type="term" value="C:CMG complex"/>
    <property type="evidence" value="ECO:0007669"/>
    <property type="project" value="EnsemblFungi"/>
</dbReference>
<dbReference type="GO" id="GO:0000811">
    <property type="term" value="C:GINS complex"/>
    <property type="evidence" value="ECO:0000318"/>
    <property type="project" value="GO_Central"/>
</dbReference>
<dbReference type="GO" id="GO:0043596">
    <property type="term" value="C:nuclear replication fork"/>
    <property type="evidence" value="ECO:0007669"/>
    <property type="project" value="EnsemblFungi"/>
</dbReference>
<dbReference type="GO" id="GO:1902983">
    <property type="term" value="P:DNA strand elongation involved in mitotic DNA replication"/>
    <property type="evidence" value="ECO:0000318"/>
    <property type="project" value="GO_Central"/>
</dbReference>
<dbReference type="GO" id="GO:0000727">
    <property type="term" value="P:double-strand break repair via break-induced replication"/>
    <property type="evidence" value="ECO:0007669"/>
    <property type="project" value="EnsemblFungi"/>
</dbReference>
<dbReference type="GO" id="GO:1902975">
    <property type="term" value="P:mitotic DNA replication initiation"/>
    <property type="evidence" value="ECO:0007669"/>
    <property type="project" value="EnsemblFungi"/>
</dbReference>
<dbReference type="CDD" id="cd11710">
    <property type="entry name" value="GINS_A_psf1"/>
    <property type="match status" value="1"/>
</dbReference>
<dbReference type="CDD" id="cd21696">
    <property type="entry name" value="GINS_B_Psf1"/>
    <property type="match status" value="1"/>
</dbReference>
<dbReference type="FunFam" id="1.20.58.1030:FF:000003">
    <property type="entry name" value="DNA replication complex GINS protein PSF1"/>
    <property type="match status" value="1"/>
</dbReference>
<dbReference type="Gene3D" id="1.20.58.1030">
    <property type="match status" value="1"/>
</dbReference>
<dbReference type="InterPro" id="IPR021151">
    <property type="entry name" value="GINS_A"/>
</dbReference>
<dbReference type="InterPro" id="IPR036224">
    <property type="entry name" value="GINS_bundle-like_dom_sf"/>
</dbReference>
<dbReference type="InterPro" id="IPR005339">
    <property type="entry name" value="GINS_Psf1"/>
</dbReference>
<dbReference type="InterPro" id="IPR056783">
    <property type="entry name" value="PSF1_C"/>
</dbReference>
<dbReference type="PANTHER" id="PTHR12914:SF2">
    <property type="entry name" value="DNA REPLICATION COMPLEX GINS PROTEIN PSF1"/>
    <property type="match status" value="1"/>
</dbReference>
<dbReference type="PANTHER" id="PTHR12914">
    <property type="entry name" value="PARTNER OF SLD5"/>
    <property type="match status" value="1"/>
</dbReference>
<dbReference type="Pfam" id="PF24997">
    <property type="entry name" value="PSF1_C"/>
    <property type="match status" value="1"/>
</dbReference>
<dbReference type="Pfam" id="PF05916">
    <property type="entry name" value="Sld5"/>
    <property type="match status" value="1"/>
</dbReference>
<dbReference type="SUPFAM" id="SSF158573">
    <property type="entry name" value="GINS helical bundle-like"/>
    <property type="match status" value="1"/>
</dbReference>
<accession>Q7SDH9</accession>
<reference key="1">
    <citation type="journal article" date="2003" name="Nature">
        <title>The genome sequence of the filamentous fungus Neurospora crassa.</title>
        <authorList>
            <person name="Galagan J.E."/>
            <person name="Calvo S.E."/>
            <person name="Borkovich K.A."/>
            <person name="Selker E.U."/>
            <person name="Read N.D."/>
            <person name="Jaffe D.B."/>
            <person name="FitzHugh W."/>
            <person name="Ma L.-J."/>
            <person name="Smirnov S."/>
            <person name="Purcell S."/>
            <person name="Rehman B."/>
            <person name="Elkins T."/>
            <person name="Engels R."/>
            <person name="Wang S."/>
            <person name="Nielsen C.B."/>
            <person name="Butler J."/>
            <person name="Endrizzi M."/>
            <person name="Qui D."/>
            <person name="Ianakiev P."/>
            <person name="Bell-Pedersen D."/>
            <person name="Nelson M.A."/>
            <person name="Werner-Washburne M."/>
            <person name="Selitrennikoff C.P."/>
            <person name="Kinsey J.A."/>
            <person name="Braun E.L."/>
            <person name="Zelter A."/>
            <person name="Schulte U."/>
            <person name="Kothe G.O."/>
            <person name="Jedd G."/>
            <person name="Mewes H.-W."/>
            <person name="Staben C."/>
            <person name="Marcotte E."/>
            <person name="Greenberg D."/>
            <person name="Roy A."/>
            <person name="Foley K."/>
            <person name="Naylor J."/>
            <person name="Stange-Thomann N."/>
            <person name="Barrett R."/>
            <person name="Gnerre S."/>
            <person name="Kamal M."/>
            <person name="Kamvysselis M."/>
            <person name="Mauceli E.W."/>
            <person name="Bielke C."/>
            <person name="Rudd S."/>
            <person name="Frishman D."/>
            <person name="Krystofova S."/>
            <person name="Rasmussen C."/>
            <person name="Metzenberg R.L."/>
            <person name="Perkins D.D."/>
            <person name="Kroken S."/>
            <person name="Cogoni C."/>
            <person name="Macino G."/>
            <person name="Catcheside D.E.A."/>
            <person name="Li W."/>
            <person name="Pratt R.J."/>
            <person name="Osmani S.A."/>
            <person name="DeSouza C.P.C."/>
            <person name="Glass N.L."/>
            <person name="Orbach M.J."/>
            <person name="Berglund J.A."/>
            <person name="Voelker R."/>
            <person name="Yarden O."/>
            <person name="Plamann M."/>
            <person name="Seiler S."/>
            <person name="Dunlap J.C."/>
            <person name="Radford A."/>
            <person name="Aramayo R."/>
            <person name="Natvig D.O."/>
            <person name="Alex L.A."/>
            <person name="Mannhaupt G."/>
            <person name="Ebbole D.J."/>
            <person name="Freitag M."/>
            <person name="Paulsen I."/>
            <person name="Sachs M.S."/>
            <person name="Lander E.S."/>
            <person name="Nusbaum C."/>
            <person name="Birren B.W."/>
        </authorList>
    </citation>
    <scope>NUCLEOTIDE SEQUENCE [LARGE SCALE GENOMIC DNA]</scope>
    <source>
        <strain>ATCC 24698 / 74-OR23-1A / CBS 708.71 / DSM 1257 / FGSC 987</strain>
    </source>
</reference>
<protein>
    <recommendedName>
        <fullName>DNA replication complex GINS protein psf1</fullName>
    </recommendedName>
    <alternativeName>
        <fullName>DNA replication complex protein 1</fullName>
    </alternativeName>
</protein>
<comment type="function">
    <text evidence="1">The GINS complex plays an essential role in the initiation of DNA replication.</text>
</comment>
<comment type="subunit">
    <text evidence="1">Component of the GINS complex which is a heterotetramer of div-26/sld5, drc-1/psf1, drc-2/psf2 and drc-3/psf3.</text>
</comment>
<comment type="subcellular location">
    <subcellularLocation>
        <location evidence="1">Nucleus</location>
    </subcellularLocation>
</comment>
<comment type="similarity">
    <text evidence="3">Belongs to the GINS1/PSF1 family.</text>
</comment>
<evidence type="ECO:0000250" key="1"/>
<evidence type="ECO:0000256" key="2">
    <source>
        <dbReference type="SAM" id="MobiDB-lite"/>
    </source>
</evidence>
<evidence type="ECO:0000305" key="3"/>
<sequence>MPMYGDLGNKLVQHAKRTQNLSHLPPYQTELVRAVAREIRDLDKDVASLLEPFQGSFDPSAEQATACTLLVNHLSMRRNKRCLLAYHRIRTDKLEELVWNGADILDLAGQTTGGPKGVTEGNEGGGTTSSLSPQEEDYFRQFGDLLALYKGQWTDIDLTGSLEPPRDLFIDVRVLKDAGEIQTEYGAINLTKNSQFYVRQGDVERLIVQGYLQKLG</sequence>